<gene>
    <name evidence="1" type="primary">lysS</name>
    <name type="ordered locus">BCAH820_0085</name>
</gene>
<accession>B7JK84</accession>
<proteinExistence type="inferred from homology"/>
<organism>
    <name type="scientific">Bacillus cereus (strain AH820)</name>
    <dbReference type="NCBI Taxonomy" id="405535"/>
    <lineage>
        <taxon>Bacteria</taxon>
        <taxon>Bacillati</taxon>
        <taxon>Bacillota</taxon>
        <taxon>Bacilli</taxon>
        <taxon>Bacillales</taxon>
        <taxon>Bacillaceae</taxon>
        <taxon>Bacillus</taxon>
        <taxon>Bacillus cereus group</taxon>
    </lineage>
</organism>
<comment type="catalytic activity">
    <reaction evidence="1">
        <text>tRNA(Lys) + L-lysine + ATP = L-lysyl-tRNA(Lys) + AMP + diphosphate</text>
        <dbReference type="Rhea" id="RHEA:20792"/>
        <dbReference type="Rhea" id="RHEA-COMP:9696"/>
        <dbReference type="Rhea" id="RHEA-COMP:9697"/>
        <dbReference type="ChEBI" id="CHEBI:30616"/>
        <dbReference type="ChEBI" id="CHEBI:32551"/>
        <dbReference type="ChEBI" id="CHEBI:33019"/>
        <dbReference type="ChEBI" id="CHEBI:78442"/>
        <dbReference type="ChEBI" id="CHEBI:78529"/>
        <dbReference type="ChEBI" id="CHEBI:456215"/>
        <dbReference type="EC" id="6.1.1.6"/>
    </reaction>
</comment>
<comment type="cofactor">
    <cofactor evidence="1">
        <name>Mg(2+)</name>
        <dbReference type="ChEBI" id="CHEBI:18420"/>
    </cofactor>
    <text evidence="1">Binds 3 Mg(2+) ions per subunit.</text>
</comment>
<comment type="subunit">
    <text evidence="1">Homodimer.</text>
</comment>
<comment type="subcellular location">
    <subcellularLocation>
        <location evidence="1">Cytoplasm</location>
    </subcellularLocation>
</comment>
<comment type="similarity">
    <text evidence="1">Belongs to the class-II aminoacyl-tRNA synthetase family.</text>
</comment>
<protein>
    <recommendedName>
        <fullName evidence="1">Lysine--tRNA ligase</fullName>
        <ecNumber evidence="1">6.1.1.6</ecNumber>
    </recommendedName>
    <alternativeName>
        <fullName evidence="1">Lysyl-tRNA synthetase</fullName>
        <shortName evidence="1">LysRS</shortName>
    </alternativeName>
</protein>
<sequence>MDNMNHEELNDQLLVRREKLHNLREQGIDPFGKRFERTNATNDLLSLYGEFSKEELEEKEISVSIAGRIMTKRGKGKAGFAHIQDLHGQVQIYVRKDAVGDEEYELFKTADLGDLVGIEGKVFKTNVGELSVKATGFTLLTKSLRPLPDKYHGLKDVEQRYRQRYLDLITSMESRETFVTRSKIIREMRRYLDDNGYLEVETPMMHAIAGGASARPFITHHNALDMELYMRIAIELHLKRLIVGGLEKVYEIGRVFRNEGVSTRHNPEFTMIELYEAYADYKDIMKLTENMVAHIAKQVLGTTTIQYGDYEINLEPKWTRLHMVDAIKEHSGADFWNPMSVEEARELAKEHNVEIKDTMEVGHIINEFFEQKVEDKLIQPTFIYGHPVEISPLAKKNDEDPRFTDRFELFIVAREHANAFTELNDPIDQKERFEAQLKEREQGNDEAHMMDDDYIEALEYGMPPTGGLGIGIDRLVMLLTNAPSIRDVLLFPAMRHKQD</sequence>
<name>SYK_BACC0</name>
<reference key="1">
    <citation type="submission" date="2008-10" db="EMBL/GenBank/DDBJ databases">
        <title>Genome sequence of Bacillus cereus AH820.</title>
        <authorList>
            <person name="Dodson R.J."/>
            <person name="Durkin A.S."/>
            <person name="Rosovitz M.J."/>
            <person name="Rasko D.A."/>
            <person name="Hoffmaster A."/>
            <person name="Ravel J."/>
            <person name="Sutton G."/>
        </authorList>
    </citation>
    <scope>NUCLEOTIDE SEQUENCE [LARGE SCALE GENOMIC DNA]</scope>
    <source>
        <strain>AH820</strain>
    </source>
</reference>
<keyword id="KW-0030">Aminoacyl-tRNA synthetase</keyword>
<keyword id="KW-0067">ATP-binding</keyword>
<keyword id="KW-0963">Cytoplasm</keyword>
<keyword id="KW-0436">Ligase</keyword>
<keyword id="KW-0460">Magnesium</keyword>
<keyword id="KW-0479">Metal-binding</keyword>
<keyword id="KW-0547">Nucleotide-binding</keyword>
<keyword id="KW-0648">Protein biosynthesis</keyword>
<evidence type="ECO:0000255" key="1">
    <source>
        <dbReference type="HAMAP-Rule" id="MF_00252"/>
    </source>
</evidence>
<dbReference type="EC" id="6.1.1.6" evidence="1"/>
<dbReference type="EMBL" id="CP001283">
    <property type="protein sequence ID" value="ACK87797.1"/>
    <property type="molecule type" value="Genomic_DNA"/>
</dbReference>
<dbReference type="RefSeq" id="WP_000369673.1">
    <property type="nucleotide sequence ID" value="NC_011773.1"/>
</dbReference>
<dbReference type="SMR" id="B7JK84"/>
<dbReference type="KEGG" id="bcu:BCAH820_0085"/>
<dbReference type="HOGENOM" id="CLU_008255_6_0_9"/>
<dbReference type="Proteomes" id="UP000001363">
    <property type="component" value="Chromosome"/>
</dbReference>
<dbReference type="GO" id="GO:0005829">
    <property type="term" value="C:cytosol"/>
    <property type="evidence" value="ECO:0007669"/>
    <property type="project" value="TreeGrafter"/>
</dbReference>
<dbReference type="GO" id="GO:0005524">
    <property type="term" value="F:ATP binding"/>
    <property type="evidence" value="ECO:0007669"/>
    <property type="project" value="UniProtKB-UniRule"/>
</dbReference>
<dbReference type="GO" id="GO:0140096">
    <property type="term" value="F:catalytic activity, acting on a protein"/>
    <property type="evidence" value="ECO:0007669"/>
    <property type="project" value="UniProtKB-ARBA"/>
</dbReference>
<dbReference type="GO" id="GO:0004824">
    <property type="term" value="F:lysine-tRNA ligase activity"/>
    <property type="evidence" value="ECO:0007669"/>
    <property type="project" value="UniProtKB-UniRule"/>
</dbReference>
<dbReference type="GO" id="GO:0000287">
    <property type="term" value="F:magnesium ion binding"/>
    <property type="evidence" value="ECO:0007669"/>
    <property type="project" value="UniProtKB-UniRule"/>
</dbReference>
<dbReference type="GO" id="GO:0016740">
    <property type="term" value="F:transferase activity"/>
    <property type="evidence" value="ECO:0007669"/>
    <property type="project" value="UniProtKB-ARBA"/>
</dbReference>
<dbReference type="GO" id="GO:0000049">
    <property type="term" value="F:tRNA binding"/>
    <property type="evidence" value="ECO:0007669"/>
    <property type="project" value="TreeGrafter"/>
</dbReference>
<dbReference type="GO" id="GO:0006430">
    <property type="term" value="P:lysyl-tRNA aminoacylation"/>
    <property type="evidence" value="ECO:0007669"/>
    <property type="project" value="UniProtKB-UniRule"/>
</dbReference>
<dbReference type="CDD" id="cd00775">
    <property type="entry name" value="LysRS_core"/>
    <property type="match status" value="1"/>
</dbReference>
<dbReference type="CDD" id="cd04322">
    <property type="entry name" value="LysRS_N"/>
    <property type="match status" value="1"/>
</dbReference>
<dbReference type="FunFam" id="2.40.50.140:FF:000024">
    <property type="entry name" value="Lysine--tRNA ligase"/>
    <property type="match status" value="1"/>
</dbReference>
<dbReference type="FunFam" id="3.30.930.10:FF:000001">
    <property type="entry name" value="Lysine--tRNA ligase"/>
    <property type="match status" value="1"/>
</dbReference>
<dbReference type="Gene3D" id="3.30.930.10">
    <property type="entry name" value="Bira Bifunctional Protein, Domain 2"/>
    <property type="match status" value="1"/>
</dbReference>
<dbReference type="Gene3D" id="2.40.50.140">
    <property type="entry name" value="Nucleic acid-binding proteins"/>
    <property type="match status" value="1"/>
</dbReference>
<dbReference type="HAMAP" id="MF_00252">
    <property type="entry name" value="Lys_tRNA_synth_class2"/>
    <property type="match status" value="1"/>
</dbReference>
<dbReference type="InterPro" id="IPR004364">
    <property type="entry name" value="Aa-tRNA-synt_II"/>
</dbReference>
<dbReference type="InterPro" id="IPR006195">
    <property type="entry name" value="aa-tRNA-synth_II"/>
</dbReference>
<dbReference type="InterPro" id="IPR045864">
    <property type="entry name" value="aa-tRNA-synth_II/BPL/LPL"/>
</dbReference>
<dbReference type="InterPro" id="IPR002313">
    <property type="entry name" value="Lys-tRNA-ligase_II"/>
</dbReference>
<dbReference type="InterPro" id="IPR034762">
    <property type="entry name" value="Lys-tRNA-ligase_II_bac/euk"/>
</dbReference>
<dbReference type="InterPro" id="IPR044136">
    <property type="entry name" value="Lys-tRNA-ligase_II_N"/>
</dbReference>
<dbReference type="InterPro" id="IPR018149">
    <property type="entry name" value="Lys-tRNA-synth_II_C"/>
</dbReference>
<dbReference type="InterPro" id="IPR012340">
    <property type="entry name" value="NA-bd_OB-fold"/>
</dbReference>
<dbReference type="InterPro" id="IPR004365">
    <property type="entry name" value="NA-bd_OB_tRNA"/>
</dbReference>
<dbReference type="NCBIfam" id="TIGR00499">
    <property type="entry name" value="lysS_bact"/>
    <property type="match status" value="1"/>
</dbReference>
<dbReference type="NCBIfam" id="NF001756">
    <property type="entry name" value="PRK00484.1"/>
    <property type="match status" value="1"/>
</dbReference>
<dbReference type="PANTHER" id="PTHR42918:SF15">
    <property type="entry name" value="LYSINE--TRNA LIGASE, CHLOROPLASTIC_MITOCHONDRIAL"/>
    <property type="match status" value="1"/>
</dbReference>
<dbReference type="PANTHER" id="PTHR42918">
    <property type="entry name" value="LYSYL-TRNA SYNTHETASE"/>
    <property type="match status" value="1"/>
</dbReference>
<dbReference type="Pfam" id="PF00152">
    <property type="entry name" value="tRNA-synt_2"/>
    <property type="match status" value="1"/>
</dbReference>
<dbReference type="Pfam" id="PF01336">
    <property type="entry name" value="tRNA_anti-codon"/>
    <property type="match status" value="1"/>
</dbReference>
<dbReference type="PIRSF" id="PIRSF039101">
    <property type="entry name" value="LysRS2"/>
    <property type="match status" value="1"/>
</dbReference>
<dbReference type="PRINTS" id="PR00982">
    <property type="entry name" value="TRNASYNTHLYS"/>
</dbReference>
<dbReference type="SUPFAM" id="SSF55681">
    <property type="entry name" value="Class II aaRS and biotin synthetases"/>
    <property type="match status" value="1"/>
</dbReference>
<dbReference type="SUPFAM" id="SSF50249">
    <property type="entry name" value="Nucleic acid-binding proteins"/>
    <property type="match status" value="1"/>
</dbReference>
<dbReference type="PROSITE" id="PS50862">
    <property type="entry name" value="AA_TRNA_LIGASE_II"/>
    <property type="match status" value="1"/>
</dbReference>
<feature type="chain" id="PRO_1000199239" description="Lysine--tRNA ligase">
    <location>
        <begin position="1"/>
        <end position="499"/>
    </location>
</feature>
<feature type="binding site" evidence="1">
    <location>
        <position position="408"/>
    </location>
    <ligand>
        <name>Mg(2+)</name>
        <dbReference type="ChEBI" id="CHEBI:18420"/>
        <label>1</label>
    </ligand>
</feature>
<feature type="binding site" evidence="1">
    <location>
        <position position="415"/>
    </location>
    <ligand>
        <name>Mg(2+)</name>
        <dbReference type="ChEBI" id="CHEBI:18420"/>
        <label>1</label>
    </ligand>
</feature>
<feature type="binding site" evidence="1">
    <location>
        <position position="415"/>
    </location>
    <ligand>
        <name>Mg(2+)</name>
        <dbReference type="ChEBI" id="CHEBI:18420"/>
        <label>2</label>
    </ligand>
</feature>